<organism>
    <name type="scientific">Mus musculus</name>
    <name type="common">Mouse</name>
    <dbReference type="NCBI Taxonomy" id="10090"/>
    <lineage>
        <taxon>Eukaryota</taxon>
        <taxon>Metazoa</taxon>
        <taxon>Chordata</taxon>
        <taxon>Craniata</taxon>
        <taxon>Vertebrata</taxon>
        <taxon>Euteleostomi</taxon>
        <taxon>Mammalia</taxon>
        <taxon>Eutheria</taxon>
        <taxon>Euarchontoglires</taxon>
        <taxon>Glires</taxon>
        <taxon>Rodentia</taxon>
        <taxon>Myomorpha</taxon>
        <taxon>Muroidea</taxon>
        <taxon>Muridae</taxon>
        <taxon>Murinae</taxon>
        <taxon>Mus</taxon>
        <taxon>Mus</taxon>
    </lineage>
</organism>
<dbReference type="EC" id="3.1.1.111" evidence="7"/>
<dbReference type="EC" id="3.1.1.32" evidence="3"/>
<dbReference type="EC" id="3.1.1.118" evidence="7 13"/>
<dbReference type="EMBL" id="BC018552">
    <property type="protein sequence ID" value="AAH18552.1"/>
    <property type="molecule type" value="mRNA"/>
</dbReference>
<dbReference type="EMBL" id="BC043475">
    <property type="protein sequence ID" value="AAH43475.1"/>
    <property type="molecule type" value="mRNA"/>
</dbReference>
<dbReference type="RefSeq" id="NP_001034195.2">
    <property type="nucleotide sequence ID" value="NM_001039106.3"/>
</dbReference>
<dbReference type="RefSeq" id="NP_001036184.1">
    <property type="nucleotide sequence ID" value="NM_001042719.2"/>
</dbReference>
<dbReference type="RefSeq" id="NP_001271328.1">
    <molecule id="Q80YA3-1"/>
    <property type="nucleotide sequence ID" value="NM_001284399.1"/>
</dbReference>
<dbReference type="RefSeq" id="NP_789815.3">
    <property type="nucleotide sequence ID" value="NM_176845.5"/>
</dbReference>
<dbReference type="BioGRID" id="227895">
    <property type="interactions" value="3"/>
</dbReference>
<dbReference type="FunCoup" id="Q80YA3">
    <property type="interactions" value="1335"/>
</dbReference>
<dbReference type="IntAct" id="Q80YA3">
    <property type="interactions" value="1"/>
</dbReference>
<dbReference type="MINT" id="Q80YA3"/>
<dbReference type="STRING" id="10090.ENSMUSP00000084577"/>
<dbReference type="ChEMBL" id="CHEMBL3259505"/>
<dbReference type="iPTMnet" id="Q80YA3"/>
<dbReference type="PhosphoSitePlus" id="Q80YA3"/>
<dbReference type="PaxDb" id="10090-ENSMUSP00000084577"/>
<dbReference type="ProteomicsDB" id="279844">
    <molecule id="Q80YA3-1"/>
</dbReference>
<dbReference type="ProteomicsDB" id="279845">
    <molecule id="Q80YA3-2"/>
</dbReference>
<dbReference type="Pumba" id="Q80YA3"/>
<dbReference type="DNASU" id="114874"/>
<dbReference type="GeneID" id="114874"/>
<dbReference type="KEGG" id="mmu:114874"/>
<dbReference type="UCSC" id="uc007tgu.2">
    <molecule id="Q80YA3-1"/>
    <property type="organism name" value="mouse"/>
</dbReference>
<dbReference type="UCSC" id="uc007tgv.2">
    <molecule id="Q80YA3-2"/>
    <property type="organism name" value="mouse"/>
</dbReference>
<dbReference type="AGR" id="MGI:2150302"/>
<dbReference type="CTD" id="80821"/>
<dbReference type="MGI" id="MGI:2150302">
    <property type="gene designation" value="Ddhd1"/>
</dbReference>
<dbReference type="eggNOG" id="KOG2308">
    <property type="taxonomic scope" value="Eukaryota"/>
</dbReference>
<dbReference type="InParanoid" id="Q80YA3"/>
<dbReference type="OrthoDB" id="431378at2759"/>
<dbReference type="BRENDA" id="3.1.1.118">
    <property type="organism ID" value="3474"/>
</dbReference>
<dbReference type="Reactome" id="R-MMU-1483166">
    <property type="pathway name" value="Synthesis of PA"/>
</dbReference>
<dbReference type="UniPathway" id="UPA00949"/>
<dbReference type="BioGRID-ORCS" id="114874">
    <property type="hits" value="6 hits in 78 CRISPR screens"/>
</dbReference>
<dbReference type="ChiTaRS" id="Ddhd1">
    <property type="organism name" value="mouse"/>
</dbReference>
<dbReference type="PRO" id="PR:Q80YA3"/>
<dbReference type="Proteomes" id="UP000000589">
    <property type="component" value="Unplaced"/>
</dbReference>
<dbReference type="RNAct" id="Q80YA3">
    <property type="molecule type" value="protein"/>
</dbReference>
<dbReference type="GO" id="GO:0005737">
    <property type="term" value="C:cytoplasm"/>
    <property type="evidence" value="ECO:0007669"/>
    <property type="project" value="UniProtKB-SubCell"/>
</dbReference>
<dbReference type="GO" id="GO:0046872">
    <property type="term" value="F:metal ion binding"/>
    <property type="evidence" value="ECO:0007669"/>
    <property type="project" value="InterPro"/>
</dbReference>
<dbReference type="GO" id="GO:0008970">
    <property type="term" value="F:phospholipase A1 activity"/>
    <property type="evidence" value="ECO:0007669"/>
    <property type="project" value="RHEA"/>
</dbReference>
<dbReference type="GO" id="GO:0046488">
    <property type="term" value="P:phosphatidylinositol metabolic process"/>
    <property type="evidence" value="ECO:0007669"/>
    <property type="project" value="UniProtKB-UniPathway"/>
</dbReference>
<dbReference type="GO" id="GO:0090141">
    <property type="term" value="P:positive regulation of mitochondrial fission"/>
    <property type="evidence" value="ECO:0000266"/>
    <property type="project" value="MGI"/>
</dbReference>
<dbReference type="GO" id="GO:0030382">
    <property type="term" value="P:sperm mitochondrion organization"/>
    <property type="evidence" value="ECO:0000315"/>
    <property type="project" value="MGI"/>
</dbReference>
<dbReference type="InterPro" id="IPR004177">
    <property type="entry name" value="DDHD_dom"/>
</dbReference>
<dbReference type="PANTHER" id="PTHR23509">
    <property type="entry name" value="PA-PL1 PHOSPHOLIPASE FAMILY"/>
    <property type="match status" value="1"/>
</dbReference>
<dbReference type="PANTHER" id="PTHR23509:SF32">
    <property type="entry name" value="PHOSPHOLIPASE DDHD1"/>
    <property type="match status" value="1"/>
</dbReference>
<dbReference type="Pfam" id="PF02862">
    <property type="entry name" value="DDHD"/>
    <property type="match status" value="1"/>
</dbReference>
<dbReference type="SMART" id="SM01127">
    <property type="entry name" value="DDHD"/>
    <property type="match status" value="1"/>
</dbReference>
<dbReference type="PROSITE" id="PS51043">
    <property type="entry name" value="DDHD"/>
    <property type="match status" value="1"/>
</dbReference>
<feature type="chain" id="PRO_0000079846" description="Phospholipase DDHD1">
    <location>
        <begin position="1"/>
        <end position="547"/>
    </location>
</feature>
<feature type="domain" description="DDHD" evidence="4">
    <location>
        <begin position="258"/>
        <end position="533"/>
    </location>
</feature>
<feature type="region of interest" description="Disordered" evidence="5">
    <location>
        <begin position="414"/>
        <end position="448"/>
    </location>
</feature>
<feature type="compositionally biased region" description="Basic and acidic residues" evidence="5">
    <location>
        <begin position="423"/>
        <end position="434"/>
    </location>
</feature>
<feature type="compositionally biased region" description="Low complexity" evidence="5">
    <location>
        <begin position="435"/>
        <end position="448"/>
    </location>
</feature>
<feature type="active site" evidence="1">
    <location>
        <position position="184"/>
    </location>
</feature>
<feature type="modified residue" description="Phosphoserine" evidence="15">
    <location>
        <position position="370"/>
    </location>
</feature>
<feature type="splice variant" id="VSP_008630" description="In isoform 2." evidence="9">
    <original>YFRLQESFFYLPQLLFPENVMQSKDDSLV</original>
    <variation>L</variation>
    <location>
        <begin position="460"/>
        <end position="488"/>
    </location>
</feature>
<gene>
    <name evidence="14" type="primary">Ddhd1</name>
</gene>
<keyword id="KW-0025">Alternative splicing</keyword>
<keyword id="KW-0963">Cytoplasm</keyword>
<keyword id="KW-0378">Hydrolase</keyword>
<keyword id="KW-0443">Lipid metabolism</keyword>
<keyword id="KW-1208">Phospholipid metabolism</keyword>
<keyword id="KW-0597">Phosphoprotein</keyword>
<keyword id="KW-1185">Reference proteome</keyword>
<name>DDHD1_MOUSE</name>
<reference key="1">
    <citation type="journal article" date="2004" name="Genome Res.">
        <title>The status, quality, and expansion of the NIH full-length cDNA project: the Mammalian Gene Collection (MGC).</title>
        <authorList>
            <consortium name="The MGC Project Team"/>
        </authorList>
    </citation>
    <scope>NUCLEOTIDE SEQUENCE [LARGE SCALE MRNA] (ISOFORM 1)</scope>
    <scope>NUCLEOTIDE SEQUENCE [LARGE SCALE MRNA] OF 271-547 (ISOFORM 2)</scope>
    <source>
        <tissue>Eye</tissue>
        <tissue>Mammary tumor</tissue>
    </source>
</reference>
<reference key="2">
    <citation type="journal article" date="2014" name="J. Biol. Chem.">
        <title>Phosphatidic acid (PA)-preferring phospholipase A1 regulates mitochondrial dynamics.</title>
        <authorList>
            <person name="Baba T."/>
            <person name="Kashiwagi Y."/>
            <person name="Arimitsu N."/>
            <person name="Kogure T."/>
            <person name="Edo A."/>
            <person name="Maruyama T."/>
            <person name="Nakao K."/>
            <person name="Nakanishi H."/>
            <person name="Kinoshita M."/>
            <person name="Frohman M.A."/>
            <person name="Yamamoto A."/>
            <person name="Tani K."/>
        </authorList>
    </citation>
    <scope>FUNCTION</scope>
    <scope>TISSUE SPECIFICITY</scope>
    <scope>DISRUPTION PHENOTYPE</scope>
</reference>
<reference key="3">
    <citation type="journal article" date="2023" name="Biomedicines">
        <title>Oleic Acid-Containing Phosphatidylinositol Is a Blood Biomarker Candidate for SPG28.</title>
        <authorList>
            <person name="Morikawa T."/>
            <person name="Takahashi M."/>
            <person name="Izumi Y."/>
            <person name="Bamba T."/>
            <person name="Moriyama K."/>
            <person name="Hattori G."/>
            <person name="Fujioka R."/>
            <person name="Miura S."/>
            <person name="Shibata H."/>
        </authorList>
    </citation>
    <scope>FUNCTION</scope>
    <scope>CATALYTIC ACTIVITY</scope>
    <scope>PATHWAY</scope>
</reference>
<reference key="4">
    <citation type="journal article" date="2010" name="Cell">
        <title>A tissue-specific atlas of mouse protein phosphorylation and expression.</title>
        <authorList>
            <person name="Huttlin E.L."/>
            <person name="Jedrychowski M.P."/>
            <person name="Elias J.E."/>
            <person name="Goswami T."/>
            <person name="Rad R."/>
            <person name="Beausoleil S.A."/>
            <person name="Villen J."/>
            <person name="Haas W."/>
            <person name="Sowa M.E."/>
            <person name="Gygi S.P."/>
        </authorList>
    </citation>
    <scope>PHOSPHORYLATION [LARGE SCALE ANALYSIS] AT SER-370</scope>
    <scope>IDENTIFICATION BY MASS SPECTROMETRY [LARGE SCALE ANALYSIS]</scope>
    <source>
        <tissue>Brain</tissue>
        <tissue>Liver</tissue>
        <tissue>Spleen</tissue>
        <tissue>Testis</tissue>
    </source>
</reference>
<reference key="5">
    <citation type="journal article" date="2018" name="Biochemistry">
        <title>The Spastic Paraplegia-Associated Phospholipase DDHD1 Is a Primary Brain Phosphatidylinositol Lipase.</title>
        <authorList>
            <person name="Inloes J.M."/>
            <person name="Jing H."/>
            <person name="Cravatt B.F."/>
        </authorList>
    </citation>
    <scope>FUNCTION</scope>
    <scope>CATALYTIC ACTIVITY</scope>
    <scope>DISRUPTION PHENOTYPE</scope>
</reference>
<reference key="6">
    <citation type="journal article" date="2023" name="J. Lipid Res.">
        <title>Cooperative lipolytic control of neuronal triacylglycerol by spastic paraplegia-associated enzyme DDHD2 and ATGL.</title>
        <authorList>
            <person name="Hofer P."/>
            <person name="Grabner G.F."/>
            <person name="Koenig M."/>
            <person name="Xie H."/>
            <person name="Bulfon D."/>
            <person name="Ludwig A.E."/>
            <person name="Wolinski H."/>
            <person name="Zimmermann R."/>
            <person name="Zechner R."/>
            <person name="Heier C."/>
        </authorList>
    </citation>
    <scope>CATALYTIC ACTIVITY</scope>
</reference>
<evidence type="ECO:0000250" key="1"/>
<evidence type="ECO:0000250" key="2">
    <source>
        <dbReference type="UniProtKB" id="O46606"/>
    </source>
</evidence>
<evidence type="ECO:0000250" key="3">
    <source>
        <dbReference type="UniProtKB" id="Q8NEL9"/>
    </source>
</evidence>
<evidence type="ECO:0000255" key="4">
    <source>
        <dbReference type="PROSITE-ProRule" id="PRU00378"/>
    </source>
</evidence>
<evidence type="ECO:0000256" key="5">
    <source>
        <dbReference type="SAM" id="MobiDB-lite"/>
    </source>
</evidence>
<evidence type="ECO:0000269" key="6">
    <source>
    </source>
</evidence>
<evidence type="ECO:0000269" key="7">
    <source>
    </source>
</evidence>
<evidence type="ECO:0000269" key="8">
    <source>
    </source>
</evidence>
<evidence type="ECO:0000303" key="9">
    <source>
    </source>
</evidence>
<evidence type="ECO:0000303" key="10">
    <source>
    </source>
</evidence>
<evidence type="ECO:0000305" key="11"/>
<evidence type="ECO:0000305" key="12">
    <source>
    </source>
</evidence>
<evidence type="ECO:0000305" key="13">
    <source>
    </source>
</evidence>
<evidence type="ECO:0000312" key="14">
    <source>
        <dbReference type="MGI" id="MGI:2150302"/>
    </source>
</evidence>
<evidence type="ECO:0007744" key="15">
    <source>
    </source>
</evidence>
<proteinExistence type="evidence at protein level"/>
<sequence length="547" mass="61823">MDEVYLYSDATTSKIARTVTQKLGFSKASSSGTRLHRGYVEEATLEDKPSQTSHIVFVVHGIGQKMDQGRIIKNTAMMREAARKMEEKHFSNHATHVEFLPVEWRSKLTLDGDTVDSITPDKVRGLRDMLNSSAMDIMYYTSPLYRDELVKGLQQELNRLYSLFCSRNPDFEEKGGKVSIVSHSLGCVITYDIMMGWNPGGLYEQLLQKEEELPDERWMSYEERHLLDELYITKRRLREIEDRLHGLKAPSISQTPALKFKVENFFCMGSPLAVFLALRGIRPGNSGSQDHILPREICNRLLNIFHPTDPVAYRLEPLILKHYSNISPVQIHWYNTSNPLPYEHMKPNFLNPAKEPTSVSDSENIAAIPSPVTSPVLSRRHYGESITNIGKASILGAASIGKGLGGMLFSRFGRSSASQPSEPSKDSLEDDKKPSASPSTTTVATQTLPHSGSGFLDSAYFRLQESFFYLPQLLFPENVMQSKDDSLVELEHRIDFELREGLVESRYWSAVTSHTAYWSSLDVALFLLTFMYKHEHDTEAKPSLGSL</sequence>
<protein>
    <recommendedName>
        <fullName evidence="11">Phospholipase DDHD1</fullName>
        <ecNumber evidence="7">3.1.1.111</ecNumber>
        <ecNumber evidence="3">3.1.1.32</ecNumber>
    </recommendedName>
    <alternativeName>
        <fullName>DDHD domain-containing protein 1</fullName>
    </alternativeName>
    <alternativeName>
        <fullName>Phosphatidic acid-preferring phospholipase A1 homolog</fullName>
        <shortName>PA-PLA1</shortName>
        <ecNumber evidence="7 13">3.1.1.118</ecNumber>
    </alternativeName>
    <alternativeName>
        <fullName>Phospholipid sn-1 acylhydrolase</fullName>
    </alternativeName>
</protein>
<comment type="function">
    <text evidence="3 6 7 10 13">Phospholipase A1 (PLA1) that hydrolyzes ester bonds at the sn-1 position of glycerophospholipids producing a free fatty acid and a lysophospholipid (Probable) (PubMed:30221923). Prefers phosphatidate (1,2-diacyl-sn-glycero-3-phosphate, PA) as substrate in vitro, but can efficiently hydrolyze phosphatidylinositol (1,2-diacyl-sn-glycero-3-phospho-(1D-myo-inositol), PI), as well as a range of other glycerophospholipid substrates such as phosphatidylcholine (1,2-diacyl-sn-glycero-3-phosphocholine, PC), phosphatidylethanolamine (1,2-diacyl-sn-glycero-3-phosphoethanolamine, PE), phosphatidylserine (1,2-diacyl-sn-glycero-3-phospho-L-serine, PS) and phosphatidylglycerol (1,2-diacyl-sn-glycero-3-phospho-(1'-sn-glycerol), PG) (Probable) (PubMed:30221923). Involved in the regulation of the endogenous content of polyunsaturated PI and PS lipids in the nervous system (PubMed:30221923). Changes in these lipids extend to downstream metabolic products like PI phosphates PIP and PIP2, which play fundamental roles in cell biology (PubMed:30221923). Regulates mitochondrial morphology (PubMed:24599962). These dynamic changes may be due to PA hydrolysis at the mitochondrial surface (PubMed:24599962). May play a regulatory role in spermatogenesis or sperm function (PubMed:24599962).</text>
</comment>
<comment type="catalytic activity">
    <reaction evidence="7">
        <text>a 1,2-diacyl-sn-glycero-3-phosphate + H2O = a 2-acyl-sn-glycerol 3-phosphate + a fatty acid + H(+)</text>
        <dbReference type="Rhea" id="RHEA:44648"/>
        <dbReference type="ChEBI" id="CHEBI:15377"/>
        <dbReference type="ChEBI" id="CHEBI:15378"/>
        <dbReference type="ChEBI" id="CHEBI:28868"/>
        <dbReference type="ChEBI" id="CHEBI:58608"/>
        <dbReference type="ChEBI" id="CHEBI:64982"/>
        <dbReference type="EC" id="3.1.1.118"/>
    </reaction>
    <physiologicalReaction direction="left-to-right" evidence="7">
        <dbReference type="Rhea" id="RHEA:44649"/>
    </physiologicalReaction>
</comment>
<comment type="catalytic activity">
    <reaction evidence="12 13">
        <text>a 1,2-diacyl-sn-glycero-3-phospho-(1D-myo-inositol) + H2O = a 2-acyl-sn-glycero-3-phospho-D-myo-inositol + a fatty acid + H(+)</text>
        <dbReference type="Rhea" id="RHEA:35263"/>
        <dbReference type="ChEBI" id="CHEBI:15377"/>
        <dbReference type="ChEBI" id="CHEBI:15378"/>
        <dbReference type="ChEBI" id="CHEBI:28868"/>
        <dbReference type="ChEBI" id="CHEBI:57880"/>
        <dbReference type="ChEBI" id="CHEBI:64872"/>
        <dbReference type="EC" id="3.1.1.118"/>
    </reaction>
    <physiologicalReaction direction="left-to-right" evidence="12 13">
        <dbReference type="Rhea" id="RHEA:35264"/>
    </physiologicalReaction>
</comment>
<comment type="catalytic activity">
    <reaction evidence="12">
        <text>1-octadecanoyl-2-(5Z,8Z,11Z,14Z-eicosatetraenoyl)-sn-glycero-3-phospho-(1D-myo-inositol) + H2O = 2-(5Z,8Z,11Z,14Z-eicosatetraenoyl)-sn-glycero-3-phospho-(1D-myo-inositol) + octadecanoate + H(+)</text>
        <dbReference type="Rhea" id="RHEA:73967"/>
        <dbReference type="ChEBI" id="CHEBI:15377"/>
        <dbReference type="ChEBI" id="CHEBI:15378"/>
        <dbReference type="ChEBI" id="CHEBI:25629"/>
        <dbReference type="ChEBI" id="CHEBI:133606"/>
        <dbReference type="ChEBI" id="CHEBI:193055"/>
    </reaction>
    <physiologicalReaction direction="left-to-right" evidence="12">
        <dbReference type="Rhea" id="RHEA:73968"/>
    </physiologicalReaction>
</comment>
<comment type="catalytic activity">
    <reaction evidence="12">
        <text>a 1-acyl-2-(5Z,8Z,11Z,14Z-eicosatetraenoyl)-sn-glycero-3-phospho-(1D-myo-inositol) + H2O = 2-(5Z,8Z,11Z,14Z-eicosatetraenoyl)-sn-glycero-3-phospho-(1D-myo-inositol) + a fatty acid + H(+)</text>
        <dbReference type="Rhea" id="RHEA:73971"/>
        <dbReference type="ChEBI" id="CHEBI:15377"/>
        <dbReference type="ChEBI" id="CHEBI:15378"/>
        <dbReference type="ChEBI" id="CHEBI:28868"/>
        <dbReference type="ChEBI" id="CHEBI:75243"/>
        <dbReference type="ChEBI" id="CHEBI:193055"/>
    </reaction>
    <physiologicalReaction direction="left-to-right" evidence="12">
        <dbReference type="Rhea" id="RHEA:73972"/>
    </physiologicalReaction>
</comment>
<comment type="catalytic activity">
    <reaction evidence="12">
        <text>1,2-dihexadecanoyl-sn-glycero-3-phospho-(1D-myo-inositol) + H2O = 2-hexadecanoyl-sn-glycero-3-phospho-(1D-myo-inositol) + hexadecanoate + H(+)</text>
        <dbReference type="Rhea" id="RHEA:66708"/>
        <dbReference type="ChEBI" id="CHEBI:7896"/>
        <dbReference type="ChEBI" id="CHEBI:15377"/>
        <dbReference type="ChEBI" id="CHEBI:15378"/>
        <dbReference type="ChEBI" id="CHEBI:72835"/>
        <dbReference type="ChEBI" id="CHEBI:167448"/>
    </reaction>
    <physiologicalReaction direction="left-to-right" evidence="12">
        <dbReference type="Rhea" id="RHEA:66709"/>
    </physiologicalReaction>
</comment>
<comment type="catalytic activity">
    <reaction evidence="12 13">
        <text>a 1-acyl-2-(5Z,8Z,11Z,14Z)-eicosatetraenoyl-sn-glycero-3-phosphate + H2O = 2-(5Z,8Z,11Z,14Z-eicosatetraenoyl)-sn-glycero-3-phosphate + a fatty acid + H(+)</text>
        <dbReference type="Rhea" id="RHEA:73975"/>
        <dbReference type="ChEBI" id="CHEBI:15377"/>
        <dbReference type="ChEBI" id="CHEBI:15378"/>
        <dbReference type="ChEBI" id="CHEBI:28868"/>
        <dbReference type="ChEBI" id="CHEBI:74922"/>
        <dbReference type="ChEBI" id="CHEBI:78209"/>
    </reaction>
    <physiologicalReaction direction="left-to-right" evidence="12 13">
        <dbReference type="Rhea" id="RHEA:73976"/>
    </physiologicalReaction>
</comment>
<comment type="catalytic activity">
    <reaction evidence="13">
        <text>1-(9Z-octadecenoyl)-2-(7Z,10Z,13Z,16Z,19Z-docosapentaenoyl)-sn-glycero-3-phospho-1D-myo-inositol + H2O = 2-(7Z,10Z,13Z,16Z,19Z-docosapentaenoyl)-sn-glycero-3-phospho-1D-myo-inositol + (9Z)-octadecenoate + H(+)</text>
        <dbReference type="Rhea" id="RHEA:76971"/>
        <dbReference type="ChEBI" id="CHEBI:15377"/>
        <dbReference type="ChEBI" id="CHEBI:15378"/>
        <dbReference type="ChEBI" id="CHEBI:30823"/>
        <dbReference type="ChEBI" id="CHEBI:195484"/>
        <dbReference type="ChEBI" id="CHEBI:195486"/>
    </reaction>
    <physiologicalReaction direction="left-to-right" evidence="13">
        <dbReference type="Rhea" id="RHEA:76972"/>
    </physiologicalReaction>
</comment>
<comment type="catalytic activity">
    <reaction evidence="13">
        <text>1-(9Z-octadecenoyl)-2-(5Z,8Z,11Z,14Z-eicosatetraenoyl)-sn-glycero-3-phospho-1D-myo-inositol + H2O = 2-(5Z,8Z,11Z,14Z-eicosatetraenoyl)-sn-glycero-3-phospho-(1D-myo-inositol) + (9Z)-octadecenoate + H(+)</text>
        <dbReference type="Rhea" id="RHEA:76975"/>
        <dbReference type="ChEBI" id="CHEBI:15377"/>
        <dbReference type="ChEBI" id="CHEBI:15378"/>
        <dbReference type="ChEBI" id="CHEBI:30823"/>
        <dbReference type="ChEBI" id="CHEBI:78765"/>
        <dbReference type="ChEBI" id="CHEBI:193055"/>
    </reaction>
    <physiologicalReaction direction="left-to-right" evidence="13">
        <dbReference type="Rhea" id="RHEA:76976"/>
    </physiologicalReaction>
</comment>
<comment type="catalytic activity">
    <reaction evidence="13">
        <text>1,2-di-(9Z-octadecenoyl)-sn-glycero-3-phospho-1D-myo-inositol + H2O = 2-(9Z-octadecenoyl)-sn-glycero-3-phospho-1D-myo-inositol + (9Z)-octadecenoate + H(+)</text>
        <dbReference type="Rhea" id="RHEA:76979"/>
        <dbReference type="ChEBI" id="CHEBI:15377"/>
        <dbReference type="ChEBI" id="CHEBI:15378"/>
        <dbReference type="ChEBI" id="CHEBI:30823"/>
        <dbReference type="ChEBI" id="CHEBI:195485"/>
        <dbReference type="ChEBI" id="CHEBI:195487"/>
    </reaction>
    <physiologicalReaction direction="left-to-right" evidence="13">
        <dbReference type="Rhea" id="RHEA:76980"/>
    </physiologicalReaction>
</comment>
<comment type="catalytic activity">
    <reaction evidence="13">
        <text>1-(9Z-octadecenoyl)-2-(8Z,11Z,14Z-eicosatrienoyl)-sn-glycero-3-phospho-1D-myo-inositol + H2O = 2-(8Z,11Z,14Z-eicosatrienoyl)-sn-glycero-3-phospho-1D-myo-inositol + (9Z)-octadecenoate + H(+)</text>
        <dbReference type="Rhea" id="RHEA:76983"/>
        <dbReference type="ChEBI" id="CHEBI:15377"/>
        <dbReference type="ChEBI" id="CHEBI:15378"/>
        <dbReference type="ChEBI" id="CHEBI:30823"/>
        <dbReference type="ChEBI" id="CHEBI:195488"/>
        <dbReference type="ChEBI" id="CHEBI:195489"/>
    </reaction>
    <physiologicalReaction direction="left-to-right" evidence="13">
        <dbReference type="Rhea" id="RHEA:76984"/>
    </physiologicalReaction>
</comment>
<comment type="catalytic activity">
    <reaction evidence="12">
        <text>1,2-di-(9Z-octadecenoyl)-sn-glycero-3-phosphate + H2O = 2-(9Z-octadecenoyl)-sn-glycero-3-phosphate + (9Z)-octadecenoate + H(+)</text>
        <dbReference type="Rhea" id="RHEA:45128"/>
        <dbReference type="ChEBI" id="CHEBI:15377"/>
        <dbReference type="ChEBI" id="CHEBI:15378"/>
        <dbReference type="ChEBI" id="CHEBI:30823"/>
        <dbReference type="ChEBI" id="CHEBI:74546"/>
        <dbReference type="ChEBI" id="CHEBI:77593"/>
    </reaction>
    <physiologicalReaction direction="left-to-right" evidence="12">
        <dbReference type="Rhea" id="RHEA:45129"/>
    </physiologicalReaction>
</comment>
<comment type="catalytic activity">
    <reaction evidence="7">
        <text>1-hexadecanoyl-2-(9Z-octadecenoyl)-sn-glycero-3-phosphate + H2O = 2-(9Z-octadecenoyl)-sn-glycero-3-phosphate + hexadecanoate + H(+)</text>
        <dbReference type="Rhea" id="RHEA:40943"/>
        <dbReference type="ChEBI" id="CHEBI:7896"/>
        <dbReference type="ChEBI" id="CHEBI:15377"/>
        <dbReference type="ChEBI" id="CHEBI:15378"/>
        <dbReference type="ChEBI" id="CHEBI:64839"/>
        <dbReference type="ChEBI" id="CHEBI:77593"/>
    </reaction>
    <physiologicalReaction direction="left-to-right" evidence="7">
        <dbReference type="Rhea" id="RHEA:40944"/>
    </physiologicalReaction>
</comment>
<comment type="catalytic activity">
    <reaction evidence="7">
        <text>1-hexadecanoyl-2-(9Z-octadecenoyl)-sn-glycero-3-phospho-L-serine + H2O = 2-(9Z-octadecenoyl)-sn-glycero-3-phospho-L-serine + hexadecanoate + H(+)</text>
        <dbReference type="Rhea" id="RHEA:43968"/>
        <dbReference type="ChEBI" id="CHEBI:7896"/>
        <dbReference type="ChEBI" id="CHEBI:15377"/>
        <dbReference type="ChEBI" id="CHEBI:15378"/>
        <dbReference type="ChEBI" id="CHEBI:75029"/>
        <dbReference type="ChEBI" id="CHEBI:77342"/>
    </reaction>
    <physiologicalReaction direction="left-to-right" evidence="7">
        <dbReference type="Rhea" id="RHEA:43969"/>
    </physiologicalReaction>
</comment>
<comment type="catalytic activity">
    <reaction evidence="2">
        <text>1,2-di-(5Z,8Z,11Z,14Z)-eicosatetraenoyl-sn-glycero-3-phosphate + H2O = 2-(5Z,8Z,11Z,14Z-eicosatetraenoyl)-sn-glycero-3-phosphate + (5Z,8Z,11Z,14Z)-eicosatetraenoate + H(+)</text>
        <dbReference type="Rhea" id="RHEA:74159"/>
        <dbReference type="ChEBI" id="CHEBI:15377"/>
        <dbReference type="ChEBI" id="CHEBI:15378"/>
        <dbReference type="ChEBI" id="CHEBI:32395"/>
        <dbReference type="ChEBI" id="CHEBI:77126"/>
        <dbReference type="ChEBI" id="CHEBI:78209"/>
    </reaction>
    <physiologicalReaction direction="left-to-right" evidence="2">
        <dbReference type="Rhea" id="RHEA:74160"/>
    </physiologicalReaction>
</comment>
<comment type="catalytic activity">
    <reaction evidence="2">
        <text>1-octadecanoyl-2-(5Z,8Z,11Z,14Z-eicosatetraenoyl)-sn-glycero-3-phosphate + H2O = 2-(5Z,8Z,11Z,14Z-eicosatetraenoyl)-sn-glycero-3-phosphate + octadecanoate + H(+)</text>
        <dbReference type="Rhea" id="RHEA:74163"/>
        <dbReference type="ChEBI" id="CHEBI:15377"/>
        <dbReference type="ChEBI" id="CHEBI:15378"/>
        <dbReference type="ChEBI" id="CHEBI:25629"/>
        <dbReference type="ChEBI" id="CHEBI:77091"/>
        <dbReference type="ChEBI" id="CHEBI:78209"/>
    </reaction>
    <physiologicalReaction direction="left-to-right" evidence="2">
        <dbReference type="Rhea" id="RHEA:74164"/>
    </physiologicalReaction>
</comment>
<comment type="catalytic activity">
    <reaction evidence="7">
        <text>a 1,2-diacyl-sn-glycero-3-phospho-L-serine + H2O = a 2-acyl-sn-glycero-3-phospho-L-serine + a fatty acid + H(+)</text>
        <dbReference type="Rhea" id="RHEA:42212"/>
        <dbReference type="ChEBI" id="CHEBI:15377"/>
        <dbReference type="ChEBI" id="CHEBI:15378"/>
        <dbReference type="ChEBI" id="CHEBI:28868"/>
        <dbReference type="ChEBI" id="CHEBI:57262"/>
        <dbReference type="ChEBI" id="CHEBI:65214"/>
        <dbReference type="EC" id="3.1.1.111"/>
    </reaction>
    <physiologicalReaction direction="left-to-right" evidence="7">
        <dbReference type="Rhea" id="RHEA:42213"/>
    </physiologicalReaction>
</comment>
<comment type="catalytic activity">
    <reaction evidence="3">
        <text>a 1,2-diacyl-sn-glycero-3-phosphocholine + H2O = a 2-acyl-sn-glycero-3-phosphocholine + a fatty acid + H(+)</text>
        <dbReference type="Rhea" id="RHEA:18689"/>
        <dbReference type="ChEBI" id="CHEBI:15377"/>
        <dbReference type="ChEBI" id="CHEBI:15378"/>
        <dbReference type="ChEBI" id="CHEBI:28868"/>
        <dbReference type="ChEBI" id="CHEBI:57643"/>
        <dbReference type="ChEBI" id="CHEBI:57875"/>
        <dbReference type="EC" id="3.1.1.32"/>
    </reaction>
    <physiologicalReaction direction="left-to-right" evidence="3">
        <dbReference type="Rhea" id="RHEA:18690"/>
    </physiologicalReaction>
</comment>
<comment type="catalytic activity">
    <reaction evidence="8">
        <text>1,2-di-(9Z-octadecenoyl)-sn-glycero-3-phosphocholine + H2O = (9Z-octadecenoyl)-sn-glycero-3-phosphocholine + (9Z)-octadecenoate + H(+)</text>
        <dbReference type="Rhea" id="RHEA:38699"/>
        <dbReference type="ChEBI" id="CHEBI:15377"/>
        <dbReference type="ChEBI" id="CHEBI:15378"/>
        <dbReference type="ChEBI" id="CHEBI:30823"/>
        <dbReference type="ChEBI" id="CHEBI:74669"/>
        <dbReference type="ChEBI" id="CHEBI:76083"/>
    </reaction>
    <physiologicalReaction direction="left-to-right" evidence="8">
        <dbReference type="Rhea" id="RHEA:38700"/>
    </physiologicalReaction>
</comment>
<comment type="catalytic activity">
    <reaction evidence="3">
        <text>a 1,2-diacyl-sn-glycero-3-phosphoethanolamine + H2O = a 2-acyl-sn-glycero-3-phosphoethanolamine + a fatty acid + H(+)</text>
        <dbReference type="Rhea" id="RHEA:44408"/>
        <dbReference type="ChEBI" id="CHEBI:15377"/>
        <dbReference type="ChEBI" id="CHEBI:15378"/>
        <dbReference type="ChEBI" id="CHEBI:28868"/>
        <dbReference type="ChEBI" id="CHEBI:64612"/>
        <dbReference type="ChEBI" id="CHEBI:65213"/>
    </reaction>
    <physiologicalReaction direction="left-to-right" evidence="3">
        <dbReference type="Rhea" id="RHEA:44409"/>
    </physiologicalReaction>
</comment>
<comment type="catalytic activity">
    <reaction evidence="7">
        <text>a 1,2-diacyl-sn-glycero-3-phospho-(1'-sn-glycerol) + H2O = 2-acyl-sn-glycero-3-phospho-(1'-sn-glycerol) + a fatty acid + H(+)</text>
        <dbReference type="Rhea" id="RHEA:67428"/>
        <dbReference type="ChEBI" id="CHEBI:15377"/>
        <dbReference type="ChEBI" id="CHEBI:15378"/>
        <dbReference type="ChEBI" id="CHEBI:28868"/>
        <dbReference type="ChEBI" id="CHEBI:64716"/>
        <dbReference type="ChEBI" id="CHEBI:76528"/>
    </reaction>
    <physiologicalReaction direction="left-to-right" evidence="7">
        <dbReference type="Rhea" id="RHEA:67429"/>
    </physiologicalReaction>
</comment>
<comment type="catalytic activity">
    <reaction evidence="7">
        <text>1-hexadecanoyl-2-(9Z-octadecenoyl)-sn-glycero-3-phospho-(1'-sn-glycerol) + H2O = 2-(9Z-octadecenoyl)-sn-glycero-3-phospho-(1'-sn-glycerol) + hexadecanoate + H(+)</text>
        <dbReference type="Rhea" id="RHEA:74103"/>
        <dbReference type="ChEBI" id="CHEBI:7896"/>
        <dbReference type="ChEBI" id="CHEBI:15377"/>
        <dbReference type="ChEBI" id="CHEBI:15378"/>
        <dbReference type="ChEBI" id="CHEBI:72841"/>
        <dbReference type="ChEBI" id="CHEBI:141490"/>
    </reaction>
    <physiologicalReaction direction="left-to-right" evidence="7">
        <dbReference type="Rhea" id="RHEA:74104"/>
    </physiologicalReaction>
</comment>
<comment type="catalytic activity">
    <reaction evidence="3">
        <text>1-acyl-2-(5Z,8Z,11Z,14Z-eicosatetraenoyl)-sn-glycero-3-phosphocholine + H2O = 2-(5Z,8Z,11Z,14Z)-eicosatetraenoyl-sn-glycero-3-phosphocholine + a fatty acid + H(+)</text>
        <dbReference type="Rhea" id="RHEA:74247"/>
        <dbReference type="ChEBI" id="CHEBI:15377"/>
        <dbReference type="ChEBI" id="CHEBI:15378"/>
        <dbReference type="ChEBI" id="CHEBI:28868"/>
        <dbReference type="ChEBI" id="CHEBI:75063"/>
        <dbReference type="ChEBI" id="CHEBI:76079"/>
    </reaction>
    <physiologicalReaction direction="left-to-right" evidence="3">
        <dbReference type="Rhea" id="RHEA:74248"/>
    </physiologicalReaction>
</comment>
<comment type="catalytic activity">
    <reaction evidence="3">
        <text>1-acyl-2-(5Z,8Z,11Z,14Z)-eicosatetraenoyl-sn-glycero-3-phosphoethanolamine + H2O = 2-(5Z,8Z,11Z,14Z)-eicosatetraenoyl-sn-glycero-3-phosphoethanolamine + a fatty acid + H(+)</text>
        <dbReference type="Rhea" id="RHEA:74251"/>
        <dbReference type="ChEBI" id="CHEBI:15377"/>
        <dbReference type="ChEBI" id="CHEBI:15378"/>
        <dbReference type="ChEBI" id="CHEBI:28868"/>
        <dbReference type="ChEBI" id="CHEBI:75067"/>
        <dbReference type="ChEBI" id="CHEBI:76091"/>
    </reaction>
    <physiologicalReaction direction="left-to-right" evidence="3">
        <dbReference type="Rhea" id="RHEA:74252"/>
    </physiologicalReaction>
</comment>
<comment type="pathway">
    <text evidence="13">Phospholipid metabolism; phosphatidylinositol metabolism.</text>
</comment>
<comment type="subunit">
    <text evidence="3">Forms homooligomers and, to a much smaller extent, heterooligomers with DDHD2. Interacts with SEC23A and SEC24C.</text>
</comment>
<comment type="subcellular location">
    <subcellularLocation>
        <location evidence="3">Cytoplasm</location>
    </subcellularLocation>
</comment>
<comment type="alternative products">
    <event type="alternative splicing"/>
    <isoform>
        <id>Q80YA3-1</id>
        <name>1</name>
        <sequence type="displayed"/>
    </isoform>
    <isoform>
        <id>Q80YA3-2</id>
        <name>2</name>
        <sequence type="described" ref="VSP_008630"/>
    </isoform>
</comment>
<comment type="tissue specificity">
    <text evidence="6">Predominantly expressed in testis, in round and elongating spermatids, but not in spermatocytes (at protein level) (PubMed:24599962). Also expressed in the brain, and at lower levels in other tissues such as thymus and lung (at protein level) (PubMed:24599962).</text>
</comment>
<comment type="disruption phenotype">
    <text evidence="6 7">Knockout mice have defects in the organization of mitochondria during spermiogenesis, leading to sperm malformation and male subfertility (PubMed:24599962). Genetic loss of DDHD1 leads to substantial reductions in polyunsaturated lysophospholipids in the brain, and reduced mechanical, but not thermal nociception (PubMed:30221923).</text>
</comment>
<comment type="similarity">
    <text evidence="11">Belongs to the PA-PLA1 family.</text>
</comment>
<accession>Q80YA3</accession>
<accession>Q8VEF2</accession>